<name>ADA_PLACD</name>
<organism>
    <name type="scientific">Plasmodium cynomolgi (strain B)</name>
    <dbReference type="NCBI Taxonomy" id="1120755"/>
    <lineage>
        <taxon>Eukaryota</taxon>
        <taxon>Sar</taxon>
        <taxon>Alveolata</taxon>
        <taxon>Apicomplexa</taxon>
        <taxon>Aconoidasida</taxon>
        <taxon>Haemosporida</taxon>
        <taxon>Plasmodiidae</taxon>
        <taxon>Plasmodium</taxon>
        <taxon>Plasmodium (Plasmodium)</taxon>
    </lineage>
</organism>
<keyword id="KW-0378">Hydrolase</keyword>
<keyword id="KW-0479">Metal-binding</keyword>
<keyword id="KW-0660">Purine salvage</keyword>
<keyword id="KW-1185">Reference proteome</keyword>
<keyword id="KW-0862">Zinc</keyword>
<reference evidence="6" key="1">
    <citation type="journal article" date="2012" name="Nat. Genet.">
        <title>Plasmodium cynomolgi genome sequences provide insight into Plasmodium vivax and the monkey malaria clade.</title>
        <authorList>
            <person name="Tachibana S."/>
            <person name="Sullivan S.A."/>
            <person name="Kawai S."/>
            <person name="Nakamura S."/>
            <person name="Kim H.R."/>
            <person name="Goto N."/>
            <person name="Arisue N."/>
            <person name="Palacpac N.M.Q."/>
            <person name="Honma H."/>
            <person name="Yagi M."/>
            <person name="Tougan T."/>
            <person name="Katakai Y."/>
            <person name="Kaneko O."/>
            <person name="Mita T."/>
            <person name="Kita K."/>
            <person name="Yasutomi Y."/>
            <person name="Sutton P.L."/>
            <person name="Shakhbatyan R."/>
            <person name="Horii T."/>
            <person name="Yasunaga T."/>
            <person name="Barnwell J.W."/>
            <person name="Escalante A.A."/>
            <person name="Carlton J.M."/>
            <person name="Tanabe K."/>
        </authorList>
    </citation>
    <scope>NUCLEOTIDE SEQUENCE [LARGE SCALE GENOMIC DNA]</scope>
    <source>
        <strain evidence="6">B</strain>
    </source>
</reference>
<reference evidence="3" key="2">
    <citation type="journal article" date="2009" name="Biochemistry">
        <title>Structural and metabolic specificity of methylthiocoformycin for malarial adenosine deaminases.</title>
        <authorList>
            <person name="Ho M.C."/>
            <person name="Cassera M.B."/>
            <person name="Madrid D.C."/>
            <person name="Ting L.M."/>
            <person name="Tyler P.C."/>
            <person name="Kim K."/>
            <person name="Almo S.C."/>
            <person name="Schramm V.L."/>
        </authorList>
    </citation>
    <scope>FUNCTION</scope>
    <scope>CATALYTIC ACTIVITY</scope>
    <scope>ACTIVITY REGULATION</scope>
    <scope>BIOPHYSICOCHEMICAL PROPERTIES</scope>
    <scope>PATHWAY</scope>
</reference>
<gene>
    <name evidence="3" type="primary">ADA</name>
    <name evidence="5" type="ORF">PCYB_062380</name>
</gene>
<protein>
    <recommendedName>
        <fullName evidence="3">Adenosine deaminase</fullName>
        <ecNumber evidence="2">3.5.4.4</ecNumber>
    </recommendedName>
    <alternativeName>
        <fullName evidence="3">S-methyl-5'-thioadenosine deaminase</fullName>
        <ecNumber evidence="2">3.5.4.31</ecNumber>
    </alternativeName>
</protein>
<evidence type="ECO:0000250" key="1">
    <source>
        <dbReference type="UniProtKB" id="A5KE01"/>
    </source>
</evidence>
<evidence type="ECO:0000269" key="2">
    <source>
    </source>
</evidence>
<evidence type="ECO:0000305" key="3"/>
<evidence type="ECO:0000305" key="4">
    <source>
    </source>
</evidence>
<evidence type="ECO:0000312" key="5">
    <source>
        <dbReference type="EMBL" id="GAB65506.1"/>
    </source>
</evidence>
<evidence type="ECO:0000312" key="6">
    <source>
        <dbReference type="Proteomes" id="UP000006319"/>
    </source>
</evidence>
<comment type="function">
    <text evidence="2 4">Catalyzes the hydrolytic deamination of adenosine to produce inosine (PubMed:19728741). Unlike mammalian adenosine deaminases, also catalyzes the deamination of 5'-methylthioadenosine (MTA), a by-product of polyamine biosynthesis, to produce 5'-methylthioinosine (MTI) (PubMed:19728741). Plays an essential role in the purine salvage pathway which allows the parasite to use host cell purines for the synthesis of nucleic acids (Probable).</text>
</comment>
<comment type="catalytic activity">
    <reaction evidence="2">
        <text>adenosine + H2O + H(+) = inosine + NH4(+)</text>
        <dbReference type="Rhea" id="RHEA:24408"/>
        <dbReference type="ChEBI" id="CHEBI:15377"/>
        <dbReference type="ChEBI" id="CHEBI:15378"/>
        <dbReference type="ChEBI" id="CHEBI:16335"/>
        <dbReference type="ChEBI" id="CHEBI:17596"/>
        <dbReference type="ChEBI" id="CHEBI:28938"/>
        <dbReference type="EC" id="3.5.4.4"/>
    </reaction>
</comment>
<comment type="catalytic activity">
    <reaction evidence="2">
        <text>S-methyl-5'-thioadenosine + H2O + H(+) = S-methyl-5'-thioinosine + NH4(+)</text>
        <dbReference type="Rhea" id="RHEA:25025"/>
        <dbReference type="ChEBI" id="CHEBI:15377"/>
        <dbReference type="ChEBI" id="CHEBI:15378"/>
        <dbReference type="ChEBI" id="CHEBI:17509"/>
        <dbReference type="ChEBI" id="CHEBI:28938"/>
        <dbReference type="ChEBI" id="CHEBI:48595"/>
        <dbReference type="EC" id="3.5.4.31"/>
    </reaction>
</comment>
<comment type="cofactor">
    <cofactor evidence="1">
        <name>Zn(2+)</name>
        <dbReference type="ChEBI" id="CHEBI:29105"/>
    </cofactor>
    <text evidence="1">Binds 1 zinc ion per subunit.</text>
</comment>
<comment type="activity regulation">
    <text evidence="2">Inhibited by coformycin and methylthiocoformycin (MT-coformycin).</text>
</comment>
<comment type="biophysicochemical properties">
    <kinetics>
        <KM evidence="2">87 uM for adenosine (at pH 8)</KM>
        <KM evidence="2">8.7 uM for 5'-methylthioadenosine (MTA) (at pH 8)</KM>
        <text evidence="2">kcat is 5.3 sec(-1) with adenosine as substrate (PubMed:19728741). kcat is 0.31 sec(-1) with 5'-methylthioadenosine as substrate (PubMed:19728741).</text>
    </kinetics>
</comment>
<comment type="pathway">
    <text evidence="4">Purine metabolism; purine nucleoside salvage.</text>
</comment>
<comment type="similarity">
    <text evidence="3">Belongs to the metallo-dependent hydrolases superfamily. Adenosine and AMP deaminases family.</text>
</comment>
<accession>K6UCV4</accession>
<dbReference type="EC" id="3.5.4.4" evidence="2"/>
<dbReference type="EC" id="3.5.4.31" evidence="2"/>
<dbReference type="EMBL" id="DF157098">
    <property type="protein sequence ID" value="GAB65506.1"/>
    <property type="molecule type" value="Genomic_DNA"/>
</dbReference>
<dbReference type="RefSeq" id="XP_004221453.1">
    <property type="nucleotide sequence ID" value="XM_004221405.1"/>
</dbReference>
<dbReference type="SMR" id="K6UCV4"/>
<dbReference type="EnsemblProtists" id="GAB65506">
    <property type="protein sequence ID" value="GAB65506"/>
    <property type="gene ID" value="PCYB_062380"/>
</dbReference>
<dbReference type="GeneID" id="14691746"/>
<dbReference type="KEGG" id="pcy:PCYB_062380"/>
<dbReference type="VEuPathDB" id="PlasmoDB:PCYB_062380"/>
<dbReference type="eggNOG" id="KOG1097">
    <property type="taxonomic scope" value="Eukaryota"/>
</dbReference>
<dbReference type="OMA" id="NHFTIHA"/>
<dbReference type="OrthoDB" id="272271at2759"/>
<dbReference type="PhylomeDB" id="K6UCV4"/>
<dbReference type="UniPathway" id="UPA00606"/>
<dbReference type="Proteomes" id="UP000006319">
    <property type="component" value="Chromosome 6"/>
</dbReference>
<dbReference type="GO" id="GO:0005829">
    <property type="term" value="C:cytosol"/>
    <property type="evidence" value="ECO:0007669"/>
    <property type="project" value="TreeGrafter"/>
</dbReference>
<dbReference type="GO" id="GO:0009897">
    <property type="term" value="C:external side of plasma membrane"/>
    <property type="evidence" value="ECO:0007669"/>
    <property type="project" value="TreeGrafter"/>
</dbReference>
<dbReference type="GO" id="GO:0090614">
    <property type="term" value="F:5'-methylthioadenosine deaminase activity"/>
    <property type="evidence" value="ECO:0000314"/>
    <property type="project" value="UniProtKB"/>
</dbReference>
<dbReference type="GO" id="GO:0004000">
    <property type="term" value="F:adenosine deaminase activity"/>
    <property type="evidence" value="ECO:0000314"/>
    <property type="project" value="UniProtKB"/>
</dbReference>
<dbReference type="GO" id="GO:0046872">
    <property type="term" value="F:metal ion binding"/>
    <property type="evidence" value="ECO:0007669"/>
    <property type="project" value="UniProtKB-KW"/>
</dbReference>
<dbReference type="GO" id="GO:0006154">
    <property type="term" value="P:adenosine catabolic process"/>
    <property type="evidence" value="ECO:0007669"/>
    <property type="project" value="TreeGrafter"/>
</dbReference>
<dbReference type="GO" id="GO:0043103">
    <property type="term" value="P:hypoxanthine salvage"/>
    <property type="evidence" value="ECO:0007669"/>
    <property type="project" value="TreeGrafter"/>
</dbReference>
<dbReference type="GO" id="GO:0046103">
    <property type="term" value="P:inosine biosynthetic process"/>
    <property type="evidence" value="ECO:0007669"/>
    <property type="project" value="TreeGrafter"/>
</dbReference>
<dbReference type="GO" id="GO:0060169">
    <property type="term" value="P:negative regulation of adenosine receptor signaling pathway"/>
    <property type="evidence" value="ECO:0007669"/>
    <property type="project" value="TreeGrafter"/>
</dbReference>
<dbReference type="GO" id="GO:0009168">
    <property type="term" value="P:purine ribonucleoside monophosphate biosynthetic process"/>
    <property type="evidence" value="ECO:0007669"/>
    <property type="project" value="InterPro"/>
</dbReference>
<dbReference type="GO" id="GO:0006166">
    <property type="term" value="P:purine ribonucleoside salvage"/>
    <property type="evidence" value="ECO:0007669"/>
    <property type="project" value="UniProtKB-KW"/>
</dbReference>
<dbReference type="Gene3D" id="3.20.20.140">
    <property type="entry name" value="Metal-dependent hydrolases"/>
    <property type="match status" value="1"/>
</dbReference>
<dbReference type="InterPro" id="IPR006650">
    <property type="entry name" value="A/AMP_deam_AS"/>
</dbReference>
<dbReference type="InterPro" id="IPR001365">
    <property type="entry name" value="A_deaminase_dom"/>
</dbReference>
<dbReference type="InterPro" id="IPR006330">
    <property type="entry name" value="Ado/ade_deaminase"/>
</dbReference>
<dbReference type="InterPro" id="IPR032466">
    <property type="entry name" value="Metal_Hydrolase"/>
</dbReference>
<dbReference type="PANTHER" id="PTHR11409">
    <property type="entry name" value="ADENOSINE DEAMINASE"/>
    <property type="match status" value="1"/>
</dbReference>
<dbReference type="PANTHER" id="PTHR11409:SF43">
    <property type="entry name" value="ADENOSINE DEAMINASE"/>
    <property type="match status" value="1"/>
</dbReference>
<dbReference type="Pfam" id="PF00962">
    <property type="entry name" value="A_deaminase"/>
    <property type="match status" value="1"/>
</dbReference>
<dbReference type="SUPFAM" id="SSF51556">
    <property type="entry name" value="Metallo-dependent hydrolases"/>
    <property type="match status" value="1"/>
</dbReference>
<dbReference type="PROSITE" id="PS00485">
    <property type="entry name" value="A_DEAMINASE"/>
    <property type="match status" value="1"/>
</dbReference>
<proteinExistence type="evidence at protein level"/>
<sequence>MNILQEPIDFLKKDEIKNIDLSQMSKKERYKIWKRIPKCELHCHLDLCFSADFFLSCIRKYNLQPNLSDEEVLDYYLFAKGGKSLGEFVEKAIRVADIFHDYEVIEDLAKHAVFNKYKEGVVLMEFRYSPTFVAFKYKLDIELIHQAIVKGIKEVVELLDHKIHVALMCIGDTGHEAANIKASADFCLKHRADFVGFDHGGHEVDLKQYKEIFDYVRESGIPLSVHAGEDVTLPNLNTLYSAIQVLKVERIGHGIRVSESQELIDMVKEKNILLEVCPISNVLLKNAKSMDTHPIRQLYDAGVKVSVNSDDPGMFLTNINDDYEELYTHLNFTLEDFMKMNEWALEKSFMDSNIKDKVKNLYF</sequence>
<feature type="chain" id="PRO_0000451868" description="Adenosine deaminase">
    <location>
        <begin position="1"/>
        <end position="363"/>
    </location>
</feature>
<feature type="region of interest" description="Gating helix loop; regulates binding affinity for substrates and thus substrate selectivity" evidence="1">
    <location>
        <begin position="170"/>
        <end position="184"/>
    </location>
</feature>
<feature type="binding site" evidence="1">
    <location>
        <position position="42"/>
    </location>
    <ligand>
        <name>Zn(2+)</name>
        <dbReference type="ChEBI" id="CHEBI:29105"/>
        <note>catalytic</note>
    </ligand>
</feature>
<feature type="binding site" evidence="1">
    <location>
        <begin position="44"/>
        <end position="46"/>
    </location>
    <ligand>
        <name>a purine D-ribonucleoside</name>
        <dbReference type="ChEBI" id="CHEBI:142355"/>
    </ligand>
</feature>
<feature type="binding site" evidence="1">
    <location>
        <position position="44"/>
    </location>
    <ligand>
        <name>Zn(2+)</name>
        <dbReference type="ChEBI" id="CHEBI:29105"/>
        <note>catalytic</note>
    </ligand>
</feature>
<feature type="binding site" evidence="1">
    <location>
        <position position="172"/>
    </location>
    <ligand>
        <name>a purine D-ribonucleoside</name>
        <dbReference type="ChEBI" id="CHEBI:142355"/>
    </ligand>
</feature>
<feature type="binding site" evidence="1">
    <location>
        <position position="201"/>
    </location>
    <ligand>
        <name>a purine D-ribonucleoside</name>
        <dbReference type="ChEBI" id="CHEBI:142355"/>
    </ligand>
</feature>
<feature type="binding site" evidence="1">
    <location>
        <position position="226"/>
    </location>
    <ligand>
        <name>Zn(2+)</name>
        <dbReference type="ChEBI" id="CHEBI:29105"/>
        <note>catalytic</note>
    </ligand>
</feature>
<feature type="binding site" evidence="1">
    <location>
        <position position="229"/>
    </location>
    <ligand>
        <name>a purine D-ribonucleoside</name>
        <dbReference type="ChEBI" id="CHEBI:142355"/>
    </ligand>
</feature>
<feature type="binding site" evidence="1">
    <location>
        <position position="253"/>
    </location>
    <ligand>
        <name>a purine D-ribonucleoside</name>
        <dbReference type="ChEBI" id="CHEBI:142355"/>
    </ligand>
</feature>
<feature type="binding site" evidence="1">
    <location>
        <position position="310"/>
    </location>
    <ligand>
        <name>a purine D-ribonucleoside</name>
        <dbReference type="ChEBI" id="CHEBI:142355"/>
    </ligand>
</feature>
<feature type="binding site" evidence="1">
    <location>
        <position position="310"/>
    </location>
    <ligand>
        <name>Zn(2+)</name>
        <dbReference type="ChEBI" id="CHEBI:29105"/>
        <note>catalytic</note>
    </ligand>
</feature>
<feature type="site" description="Important for substrate specificity for S-methyl-5'-thioadenosine" evidence="1">
    <location>
        <position position="172"/>
    </location>
</feature>